<name>ARAA_ECO7I</name>
<accession>B7NHG8</accession>
<dbReference type="EC" id="5.3.1.4" evidence="1"/>
<dbReference type="EMBL" id="CU928164">
    <property type="protein sequence ID" value="CAR16206.1"/>
    <property type="molecule type" value="Genomic_DNA"/>
</dbReference>
<dbReference type="RefSeq" id="WP_000151725.1">
    <property type="nucleotide sequence ID" value="NC_011750.1"/>
</dbReference>
<dbReference type="RefSeq" id="YP_002406113.1">
    <property type="nucleotide sequence ID" value="NC_011750.1"/>
</dbReference>
<dbReference type="SMR" id="B7NHG8"/>
<dbReference type="STRING" id="585057.ECIAI39_0065"/>
<dbReference type="KEGG" id="ect:ECIAI39_0065"/>
<dbReference type="PATRIC" id="fig|585057.6.peg.70"/>
<dbReference type="HOGENOM" id="CLU_045663_0_0_6"/>
<dbReference type="UniPathway" id="UPA00145">
    <property type="reaction ID" value="UER00565"/>
</dbReference>
<dbReference type="Proteomes" id="UP000000749">
    <property type="component" value="Chromosome"/>
</dbReference>
<dbReference type="GO" id="GO:0005829">
    <property type="term" value="C:cytosol"/>
    <property type="evidence" value="ECO:0007669"/>
    <property type="project" value="TreeGrafter"/>
</dbReference>
<dbReference type="GO" id="GO:0008733">
    <property type="term" value="F:L-arabinose isomerase activity"/>
    <property type="evidence" value="ECO:0007669"/>
    <property type="project" value="UniProtKB-UniRule"/>
</dbReference>
<dbReference type="GO" id="GO:0030145">
    <property type="term" value="F:manganese ion binding"/>
    <property type="evidence" value="ECO:0007669"/>
    <property type="project" value="UniProtKB-UniRule"/>
</dbReference>
<dbReference type="GO" id="GO:0019569">
    <property type="term" value="P:L-arabinose catabolic process to xylulose 5-phosphate"/>
    <property type="evidence" value="ECO:0007669"/>
    <property type="project" value="UniProtKB-UniRule"/>
</dbReference>
<dbReference type="CDD" id="cd03557">
    <property type="entry name" value="L-arabinose_isomerase"/>
    <property type="match status" value="1"/>
</dbReference>
<dbReference type="FunFam" id="3.40.50.10940:FF:000001">
    <property type="entry name" value="L-arabinose isomerase"/>
    <property type="match status" value="1"/>
</dbReference>
<dbReference type="Gene3D" id="3.40.50.10940">
    <property type="match status" value="1"/>
</dbReference>
<dbReference type="HAMAP" id="MF_00519">
    <property type="entry name" value="Arabinose_Isome"/>
    <property type="match status" value="1"/>
</dbReference>
<dbReference type="InterPro" id="IPR024664">
    <property type="entry name" value="Ara_Isoase_C"/>
</dbReference>
<dbReference type="InterPro" id="IPR055390">
    <property type="entry name" value="AraA_central"/>
</dbReference>
<dbReference type="InterPro" id="IPR055389">
    <property type="entry name" value="AraA_N"/>
</dbReference>
<dbReference type="InterPro" id="IPR038583">
    <property type="entry name" value="AraA_N_sf"/>
</dbReference>
<dbReference type="InterPro" id="IPR004216">
    <property type="entry name" value="Fuc/Ara_isomerase_C"/>
</dbReference>
<dbReference type="InterPro" id="IPR009015">
    <property type="entry name" value="Fucose_isomerase_N/cen_sf"/>
</dbReference>
<dbReference type="InterPro" id="IPR003762">
    <property type="entry name" value="Lara_isomerase"/>
</dbReference>
<dbReference type="NCBIfam" id="NF002795">
    <property type="entry name" value="PRK02929.1"/>
    <property type="match status" value="1"/>
</dbReference>
<dbReference type="PANTHER" id="PTHR38464">
    <property type="entry name" value="L-ARABINOSE ISOMERASE"/>
    <property type="match status" value="1"/>
</dbReference>
<dbReference type="PANTHER" id="PTHR38464:SF1">
    <property type="entry name" value="L-ARABINOSE ISOMERASE"/>
    <property type="match status" value="1"/>
</dbReference>
<dbReference type="Pfam" id="PF24856">
    <property type="entry name" value="AraA_central"/>
    <property type="match status" value="1"/>
</dbReference>
<dbReference type="Pfam" id="PF02610">
    <property type="entry name" value="AraA_N"/>
    <property type="match status" value="1"/>
</dbReference>
<dbReference type="Pfam" id="PF11762">
    <property type="entry name" value="Arabinose_Iso_C"/>
    <property type="match status" value="1"/>
</dbReference>
<dbReference type="PIRSF" id="PIRSF001478">
    <property type="entry name" value="L-ara_isomerase"/>
    <property type="match status" value="1"/>
</dbReference>
<dbReference type="SUPFAM" id="SSF50443">
    <property type="entry name" value="FucI/AraA C-terminal domain-like"/>
    <property type="match status" value="1"/>
</dbReference>
<dbReference type="SUPFAM" id="SSF53743">
    <property type="entry name" value="FucI/AraA N-terminal and middle domains"/>
    <property type="match status" value="1"/>
</dbReference>
<gene>
    <name evidence="1" type="primary">araA</name>
    <name type="ordered locus">ECIAI39_0065</name>
</gene>
<keyword id="KW-0054">Arabinose catabolism</keyword>
<keyword id="KW-0119">Carbohydrate metabolism</keyword>
<keyword id="KW-0413">Isomerase</keyword>
<keyword id="KW-0464">Manganese</keyword>
<keyword id="KW-0479">Metal-binding</keyword>
<protein>
    <recommendedName>
        <fullName evidence="1">L-arabinose isomerase</fullName>
        <ecNumber evidence="1">5.3.1.4</ecNumber>
    </recommendedName>
</protein>
<sequence length="500" mass="56161">MTIFDNYEVWFVIGSQHLYGPETLRQVTQHAEHVVNALNTEAKLPCKLVLKPLGTTPDEITAICRDANYDDRCAGLVVWLHTFSPAKMWINGLTMLNKPLLQFHTQFNAALPWDSIDMDFMNLNQTAHGGREFGFIGARMRQQHAVVTGHWQDKQAHERIGSWMRQAVSKQDTRHLKVCRFGDNMREVAVTDGDKVAAQIKFGFSVNTWAVGDLVQVVNSISDGDVNALVDEYESCYTMTPATQIHGEKRQNVLEAARIELGMKRFLEQGGFHAFTTTFEDLHGLKQLPGLAVQRLMQQGYGFAGEGDWKTAALLRIMKVMSTGLQGGTSFMEDYTYHFEKDNDLVLGSHMLEVCPSIAVEEKPILDVQHLGIGGKDDPARLIFNTQTGPAIVASLIDLGDRYRLLVNCIDTVKTPHSLPKLPVANALWKAQPDLPTASEAWILAGGAHHTVFSHALNLNDMRQFAEMHDIEITVIDNDTRLPAFKDALRWNEVYYGFRR</sequence>
<organism>
    <name type="scientific">Escherichia coli O7:K1 (strain IAI39 / ExPEC)</name>
    <dbReference type="NCBI Taxonomy" id="585057"/>
    <lineage>
        <taxon>Bacteria</taxon>
        <taxon>Pseudomonadati</taxon>
        <taxon>Pseudomonadota</taxon>
        <taxon>Gammaproteobacteria</taxon>
        <taxon>Enterobacterales</taxon>
        <taxon>Enterobacteriaceae</taxon>
        <taxon>Escherichia</taxon>
    </lineage>
</organism>
<reference key="1">
    <citation type="journal article" date="2009" name="PLoS Genet.">
        <title>Organised genome dynamics in the Escherichia coli species results in highly diverse adaptive paths.</title>
        <authorList>
            <person name="Touchon M."/>
            <person name="Hoede C."/>
            <person name="Tenaillon O."/>
            <person name="Barbe V."/>
            <person name="Baeriswyl S."/>
            <person name="Bidet P."/>
            <person name="Bingen E."/>
            <person name="Bonacorsi S."/>
            <person name="Bouchier C."/>
            <person name="Bouvet O."/>
            <person name="Calteau A."/>
            <person name="Chiapello H."/>
            <person name="Clermont O."/>
            <person name="Cruveiller S."/>
            <person name="Danchin A."/>
            <person name="Diard M."/>
            <person name="Dossat C."/>
            <person name="Karoui M.E."/>
            <person name="Frapy E."/>
            <person name="Garry L."/>
            <person name="Ghigo J.M."/>
            <person name="Gilles A.M."/>
            <person name="Johnson J."/>
            <person name="Le Bouguenec C."/>
            <person name="Lescat M."/>
            <person name="Mangenot S."/>
            <person name="Martinez-Jehanne V."/>
            <person name="Matic I."/>
            <person name="Nassif X."/>
            <person name="Oztas S."/>
            <person name="Petit M.A."/>
            <person name="Pichon C."/>
            <person name="Rouy Z."/>
            <person name="Ruf C.S."/>
            <person name="Schneider D."/>
            <person name="Tourret J."/>
            <person name="Vacherie B."/>
            <person name="Vallenet D."/>
            <person name="Medigue C."/>
            <person name="Rocha E.P.C."/>
            <person name="Denamur E."/>
        </authorList>
    </citation>
    <scope>NUCLEOTIDE SEQUENCE [LARGE SCALE GENOMIC DNA]</scope>
    <source>
        <strain>IAI39 / ExPEC</strain>
    </source>
</reference>
<feature type="chain" id="PRO_1000127601" description="L-arabinose isomerase">
    <location>
        <begin position="1"/>
        <end position="500"/>
    </location>
</feature>
<feature type="binding site" evidence="1">
    <location>
        <position position="306"/>
    </location>
    <ligand>
        <name>Mn(2+)</name>
        <dbReference type="ChEBI" id="CHEBI:29035"/>
    </ligand>
</feature>
<feature type="binding site" evidence="1">
    <location>
        <position position="333"/>
    </location>
    <ligand>
        <name>Mn(2+)</name>
        <dbReference type="ChEBI" id="CHEBI:29035"/>
    </ligand>
</feature>
<feature type="binding site" evidence="1">
    <location>
        <position position="350"/>
    </location>
    <ligand>
        <name>Mn(2+)</name>
        <dbReference type="ChEBI" id="CHEBI:29035"/>
    </ligand>
</feature>
<feature type="binding site" evidence="1">
    <location>
        <position position="450"/>
    </location>
    <ligand>
        <name>Mn(2+)</name>
        <dbReference type="ChEBI" id="CHEBI:29035"/>
    </ligand>
</feature>
<evidence type="ECO:0000255" key="1">
    <source>
        <dbReference type="HAMAP-Rule" id="MF_00519"/>
    </source>
</evidence>
<proteinExistence type="inferred from homology"/>
<comment type="function">
    <text evidence="1">Catalyzes the conversion of L-arabinose to L-ribulose.</text>
</comment>
<comment type="catalytic activity">
    <reaction evidence="1">
        <text>beta-L-arabinopyranose = L-ribulose</text>
        <dbReference type="Rhea" id="RHEA:14821"/>
        <dbReference type="ChEBI" id="CHEBI:16880"/>
        <dbReference type="ChEBI" id="CHEBI:40886"/>
        <dbReference type="EC" id="5.3.1.4"/>
    </reaction>
</comment>
<comment type="cofactor">
    <cofactor evidence="1">
        <name>Mn(2+)</name>
        <dbReference type="ChEBI" id="CHEBI:29035"/>
    </cofactor>
    <text evidence="1">Binds 1 Mn(2+) ion per subunit.</text>
</comment>
<comment type="pathway">
    <text evidence="1">Carbohydrate degradation; L-arabinose degradation via L-ribulose; D-xylulose 5-phosphate from L-arabinose (bacterial route): step 1/3.</text>
</comment>
<comment type="subunit">
    <text evidence="1">Homohexamer.</text>
</comment>
<comment type="similarity">
    <text evidence="1">Belongs to the arabinose isomerase family.</text>
</comment>